<reference key="1">
    <citation type="journal article" date="1989" name="Eur. J. Biochem.">
        <title>Comparison of the amino acid sequence of the lytic enzyme from broad-host-range bacteriophage PRD1 with sequences of other cell-wall-peptidoglycan lytic enzymes.</title>
        <authorList>
            <person name="Pakula T.M."/>
            <person name="Savilahti H."/>
            <person name="Bamford D.H."/>
        </authorList>
    </citation>
    <scope>NUCLEOTIDE SEQUENCE [GENOMIC DNA]</scope>
</reference>
<reference key="2">
    <citation type="journal article" date="1987" name="Gene">
        <title>The complete nucleotide sequence of the left very early region of Escherichia coli bacteriophage PRD1 coding for the terminal protein and the DNA polymerase.</title>
        <authorList>
            <person name="Savilahti H."/>
            <person name="Bamford D.H."/>
        </authorList>
    </citation>
    <scope>NUCLEOTIDE SEQUENCE [GENOMIC DNA] OF 1-98</scope>
</reference>
<reference key="3">
    <citation type="journal article" date="1991" name="Virology">
        <title>Genome organization of membrane-containing bacteriophage PRD1.</title>
        <authorList>
            <person name="Bamford J.K.H."/>
            <person name="Haenninen A.-L."/>
            <person name="Pakula T.M."/>
            <person name="Ojala P.M."/>
            <person name="Kalkkinen N."/>
            <person name="Frilander M."/>
            <person name="Bamford D.H."/>
        </authorList>
    </citation>
    <scope>NUCLEOTIDE SEQUENCE [GENOMIC DNA]</scope>
</reference>
<reference key="4">
    <citation type="journal article" date="2005" name="J. Mol. Biol.">
        <title>A snapshot of viral evolution from genome analysis of the tectiviridae family.</title>
        <authorList>
            <person name="Saren A.M."/>
            <person name="Ravantti J.J."/>
            <person name="Benson S.D."/>
            <person name="Burnett R.M."/>
            <person name="Paulin L."/>
            <person name="Bamford D.H."/>
            <person name="Bamford J.K.H."/>
        </authorList>
    </citation>
    <scope>NUCLEOTIDE SEQUENCE [GENOMIC DNA]</scope>
</reference>
<reference key="5">
    <citation type="journal article" date="1994" name="Eur. J. Biochem.">
        <title>Gene XV of bacteriophage PRD1 encodes a lytic enzyme with muramidase activity.</title>
        <authorList>
            <person name="Caldentey J."/>
            <person name="Hanninen A.L."/>
            <person name="Bamford D.H."/>
        </authorList>
    </citation>
    <scope>FUNCTION</scope>
    <scope>CATALYTIC ACTIVITY</scope>
</reference>
<reference key="6">
    <citation type="journal article" date="2002" name="J. Bacteriol.">
        <title>The lytic enzyme of bacteriophage PRD1 is associated with the viral membrane.</title>
        <authorList>
            <person name="Rydman P.S."/>
            <person name="Bamford D.H."/>
        </authorList>
    </citation>
    <scope>FUNCTION</scope>
    <scope>SUBCELLULAR LOCATION</scope>
    <scope>CATALYTIC ACTIVITY</scope>
</reference>
<evidence type="ECO:0000269" key="1">
    <source>
    </source>
</evidence>
<evidence type="ECO:0000269" key="2">
    <source>
    </source>
</evidence>
<evidence type="ECO:0000305" key="3"/>
<keyword id="KW-0929">Antimicrobial</keyword>
<keyword id="KW-0081">Bacteriolytic enzyme</keyword>
<keyword id="KW-0204">Cytolysis</keyword>
<keyword id="KW-0326">Glycosidase</keyword>
<keyword id="KW-0578">Host cell lysis by virus</keyword>
<keyword id="KW-0378">Hydrolase</keyword>
<keyword id="KW-0472">Membrane</keyword>
<keyword id="KW-1185">Reference proteome</keyword>
<keyword id="KW-1188">Viral release from host cell</keyword>
<keyword id="KW-0946">Virion</keyword>
<organismHost>
    <name type="scientific">Acinetobacter calcoaceticus</name>
    <dbReference type="NCBI Taxonomy" id="471"/>
</organismHost>
<organismHost>
    <name type="scientific">Escherichia coli</name>
    <dbReference type="NCBI Taxonomy" id="562"/>
</organismHost>
<organismHost>
    <name type="scientific">Proteus mirabilis</name>
    <dbReference type="NCBI Taxonomy" id="584"/>
</organismHost>
<organismHost>
    <name type="scientific">Pseudomonas aeruginosa</name>
    <dbReference type="NCBI Taxonomy" id="287"/>
</organismHost>
<organismHost>
    <name type="scientific">Pseudomonas fluorescens</name>
    <dbReference type="NCBI Taxonomy" id="294"/>
</organismHost>
<organismHost>
    <name type="scientific">Pseudomonas putida</name>
    <name type="common">Arthrobacter siderocapsulatus</name>
    <dbReference type="NCBI Taxonomy" id="303"/>
</organismHost>
<organismHost>
    <name type="scientific">Salmonella typhimurium</name>
    <dbReference type="NCBI Taxonomy" id="90371"/>
</organismHost>
<organismHost>
    <name type="scientific">Vibrio cholerae</name>
    <dbReference type="NCBI Taxonomy" id="666"/>
</organismHost>
<accession>P13559</accession>
<accession>Q3T4P3</accession>
<organism>
    <name type="scientific">Enterobacteria phage PRD1</name>
    <name type="common">Bacteriophage PRD1</name>
    <dbReference type="NCBI Taxonomy" id="10658"/>
    <lineage>
        <taxon>Viruses</taxon>
        <taxon>Varidnaviria</taxon>
        <taxon>Bamfordvirae</taxon>
        <taxon>Preplasmiviricota</taxon>
        <taxon>Tectiliviricetes</taxon>
        <taxon>Kalamavirales</taxon>
        <taxon>Tectiviridae</taxon>
        <taxon>Alphatectivirus</taxon>
        <taxon>Alphatectivirus PRD1</taxon>
    </lineage>
</organism>
<name>ENLYS_BPPRD</name>
<dbReference type="EC" id="3.2.1.17" evidence="1 2"/>
<dbReference type="EMBL" id="X14980">
    <property type="protein sequence ID" value="CAA33104.1"/>
    <property type="molecule type" value="Genomic_DNA"/>
</dbReference>
<dbReference type="EMBL" id="M22161">
    <property type="protein sequence ID" value="AAA32451.1"/>
    <property type="molecule type" value="Genomic_DNA"/>
</dbReference>
<dbReference type="EMBL" id="AY848689">
    <property type="protein sequence ID" value="AAX45908.1"/>
    <property type="molecule type" value="Genomic_DNA"/>
</dbReference>
<dbReference type="PIR" id="S03568">
    <property type="entry name" value="LYBPD1"/>
</dbReference>
<dbReference type="RefSeq" id="NP_040683.1">
    <property type="nucleotide sequence ID" value="NC_001421.2"/>
</dbReference>
<dbReference type="RefSeq" id="YP_009639957.1">
    <property type="nucleotide sequence ID" value="NC_001421.2"/>
</dbReference>
<dbReference type="SMR" id="P13559"/>
<dbReference type="GeneID" id="1260935"/>
<dbReference type="OrthoDB" id="31314at10239"/>
<dbReference type="Proteomes" id="UP000002143">
    <property type="component" value="Segment"/>
</dbReference>
<dbReference type="GO" id="GO:0016020">
    <property type="term" value="C:membrane"/>
    <property type="evidence" value="ECO:0007669"/>
    <property type="project" value="UniProtKB-KW"/>
</dbReference>
<dbReference type="GO" id="GO:0055036">
    <property type="term" value="C:virion membrane"/>
    <property type="evidence" value="ECO:0000314"/>
    <property type="project" value="CACAO"/>
</dbReference>
<dbReference type="GO" id="GO:0003796">
    <property type="term" value="F:lysozyme activity"/>
    <property type="evidence" value="ECO:0000314"/>
    <property type="project" value="CACAO"/>
</dbReference>
<dbReference type="GO" id="GO:0033922">
    <property type="term" value="F:peptidoglycan beta-N-acetylmuramidase activity"/>
    <property type="evidence" value="ECO:0000314"/>
    <property type="project" value="CACAO"/>
</dbReference>
<dbReference type="GO" id="GO:0044277">
    <property type="term" value="P:cell wall disassembly"/>
    <property type="evidence" value="ECO:0000314"/>
    <property type="project" value="CACAO"/>
</dbReference>
<dbReference type="GO" id="GO:0042742">
    <property type="term" value="P:defense response to bacterium"/>
    <property type="evidence" value="ECO:0007669"/>
    <property type="project" value="UniProtKB-KW"/>
</dbReference>
<dbReference type="GO" id="GO:0044659">
    <property type="term" value="P:viral release from host cell by cytolysis"/>
    <property type="evidence" value="ECO:0000314"/>
    <property type="project" value="CACAO"/>
</dbReference>
<dbReference type="InterPro" id="IPR024408">
    <property type="entry name" value="Muramidase"/>
</dbReference>
<dbReference type="InterPro" id="IPR016284">
    <property type="entry name" value="Phage_PRD1_P15_lysozyme"/>
</dbReference>
<dbReference type="Pfam" id="PF11860">
    <property type="entry name" value="Muramidase"/>
    <property type="match status" value="1"/>
</dbReference>
<dbReference type="PIRSF" id="PIRSF001069">
    <property type="entry name" value="Lytic_enz_p15"/>
    <property type="match status" value="1"/>
</dbReference>
<feature type="chain" id="PRO_0000165348" description="Endolysin">
    <location>
        <begin position="1"/>
        <end position="149"/>
    </location>
</feature>
<comment type="function">
    <text evidence="1 2">Endolysin involved in host peptidoglycan digestion after permeabilization of the cytoplasmic membrane by holin. Involved in host cell lysis and liberation of progeny phages. Displays strong lytic activity against chloroform-treated Gram-negative cells.</text>
</comment>
<comment type="catalytic activity">
    <reaction evidence="1 2">
        <text>Hydrolysis of (1-&gt;4)-beta-linkages between N-acetylmuramic acid and N-acetyl-D-glucosamine residues in a peptidoglycan and between N-acetyl-D-glucosamine residues in chitodextrins.</text>
        <dbReference type="EC" id="3.2.1.17"/>
    </reaction>
</comment>
<comment type="biophysicochemical properties">
    <phDependence>
        <text>Optimum pH is 7.0-8.0.</text>
    </phDependence>
    <temperatureDependence>
        <text>Inactivation temperature above 4 degrees Celsius.</text>
    </temperatureDependence>
</comment>
<comment type="subcellular location">
    <subcellularLocation>
        <location evidence="1">Virion membrane</location>
        <topology evidence="1">Peripheral membrane protein</topology>
    </subcellularLocation>
    <text evidence="1">May be associated with the viral membrane via P20 and P22.</text>
</comment>
<comment type="similarity">
    <text evidence="3">Belongs to the glycosyl hydrolase 24 family.</text>
</comment>
<protein>
    <recommendedName>
        <fullName>Endolysin</fullName>
        <ecNumber evidence="1 2">3.2.1.17</ecNumber>
    </recommendedName>
    <alternativeName>
        <fullName>Beta-1,4-N-acetylmuramidase</fullName>
    </alternativeName>
    <alternativeName>
        <fullName>Lysozyme</fullName>
    </alternativeName>
    <alternativeName>
        <fullName>Lytic enzyme</fullName>
    </alternativeName>
    <alternativeName>
        <fullName>Muramidase</fullName>
    </alternativeName>
    <alternativeName>
        <fullName>Protein P15</fullName>
    </alternativeName>
</protein>
<gene>
    <name type="primary">XV</name>
</gene>
<sequence length="149" mass="17269">MQYTLWDIISRVESNGNLKALRFEPEYYQRRMERGDWDNSIIQNIRAANKCSLGTARMIYCSSWGAVQIMGFNLYLNGAFNLSVAHFMENEAYQVNEFRRFLLKNGLTEYTPERLASDKAARVKFAKVYNGAESYADLILQACQFYGVK</sequence>
<proteinExistence type="evidence at protein level"/>